<reference key="1">
    <citation type="submission" date="2006-08" db="EMBL/GenBank/DDBJ databases">
        <title>Complete sequence of chromosome 1 of Burkholderia cenocepacia HI2424.</title>
        <authorList>
            <person name="Copeland A."/>
            <person name="Lucas S."/>
            <person name="Lapidus A."/>
            <person name="Barry K."/>
            <person name="Detter J.C."/>
            <person name="Glavina del Rio T."/>
            <person name="Hammon N."/>
            <person name="Israni S."/>
            <person name="Pitluck S."/>
            <person name="Chain P."/>
            <person name="Malfatti S."/>
            <person name="Shin M."/>
            <person name="Vergez L."/>
            <person name="Schmutz J."/>
            <person name="Larimer F."/>
            <person name="Land M."/>
            <person name="Hauser L."/>
            <person name="Kyrpides N."/>
            <person name="Kim E."/>
            <person name="LiPuma J.J."/>
            <person name="Gonzalez C.F."/>
            <person name="Konstantinidis K."/>
            <person name="Tiedje J.M."/>
            <person name="Richardson P."/>
        </authorList>
    </citation>
    <scope>NUCLEOTIDE SEQUENCE [LARGE SCALE GENOMIC DNA]</scope>
    <source>
        <strain>HI2424</strain>
    </source>
</reference>
<accession>A0K3N5</accession>
<name>RL14_BURCH</name>
<organism>
    <name type="scientific">Burkholderia cenocepacia (strain HI2424)</name>
    <dbReference type="NCBI Taxonomy" id="331272"/>
    <lineage>
        <taxon>Bacteria</taxon>
        <taxon>Pseudomonadati</taxon>
        <taxon>Pseudomonadota</taxon>
        <taxon>Betaproteobacteria</taxon>
        <taxon>Burkholderiales</taxon>
        <taxon>Burkholderiaceae</taxon>
        <taxon>Burkholderia</taxon>
        <taxon>Burkholderia cepacia complex</taxon>
    </lineage>
</organism>
<keyword id="KW-0687">Ribonucleoprotein</keyword>
<keyword id="KW-0689">Ribosomal protein</keyword>
<keyword id="KW-0694">RNA-binding</keyword>
<keyword id="KW-0699">rRNA-binding</keyword>
<proteinExistence type="inferred from homology"/>
<sequence>MIQTESRLEVADNTGAREVLCIKVLGGSKRRYAGIGDIIKVSVKEATPRGRVKKGEIYNAVVVRTAKGVRRQDGSLIKFDGNAAVLLNNKLEPIGTRIFGPVTRELRSERFMKIVSLAPEVL</sequence>
<protein>
    <recommendedName>
        <fullName evidence="1">Large ribosomal subunit protein uL14</fullName>
    </recommendedName>
    <alternativeName>
        <fullName evidence="2">50S ribosomal protein L14</fullName>
    </alternativeName>
</protein>
<feature type="chain" id="PRO_1000055531" description="Large ribosomal subunit protein uL14">
    <location>
        <begin position="1"/>
        <end position="122"/>
    </location>
</feature>
<gene>
    <name evidence="1" type="primary">rplN</name>
    <name type="ordered locus">Bcen2424_0358</name>
</gene>
<dbReference type="EMBL" id="CP000458">
    <property type="protein sequence ID" value="ABK07112.1"/>
    <property type="molecule type" value="Genomic_DNA"/>
</dbReference>
<dbReference type="RefSeq" id="WP_006482918.1">
    <property type="nucleotide sequence ID" value="NC_008542.1"/>
</dbReference>
<dbReference type="SMR" id="A0K3N5"/>
<dbReference type="GeneID" id="93193441"/>
<dbReference type="KEGG" id="bch:Bcen2424_0358"/>
<dbReference type="HOGENOM" id="CLU_095071_2_1_4"/>
<dbReference type="GO" id="GO:0022625">
    <property type="term" value="C:cytosolic large ribosomal subunit"/>
    <property type="evidence" value="ECO:0007669"/>
    <property type="project" value="TreeGrafter"/>
</dbReference>
<dbReference type="GO" id="GO:0070180">
    <property type="term" value="F:large ribosomal subunit rRNA binding"/>
    <property type="evidence" value="ECO:0007669"/>
    <property type="project" value="TreeGrafter"/>
</dbReference>
<dbReference type="GO" id="GO:0003735">
    <property type="term" value="F:structural constituent of ribosome"/>
    <property type="evidence" value="ECO:0007669"/>
    <property type="project" value="InterPro"/>
</dbReference>
<dbReference type="GO" id="GO:0006412">
    <property type="term" value="P:translation"/>
    <property type="evidence" value="ECO:0007669"/>
    <property type="project" value="UniProtKB-UniRule"/>
</dbReference>
<dbReference type="CDD" id="cd00337">
    <property type="entry name" value="Ribosomal_uL14"/>
    <property type="match status" value="1"/>
</dbReference>
<dbReference type="FunFam" id="2.40.150.20:FF:000001">
    <property type="entry name" value="50S ribosomal protein L14"/>
    <property type="match status" value="1"/>
</dbReference>
<dbReference type="Gene3D" id="2.40.150.20">
    <property type="entry name" value="Ribosomal protein L14"/>
    <property type="match status" value="1"/>
</dbReference>
<dbReference type="HAMAP" id="MF_01367">
    <property type="entry name" value="Ribosomal_uL14"/>
    <property type="match status" value="1"/>
</dbReference>
<dbReference type="InterPro" id="IPR000218">
    <property type="entry name" value="Ribosomal_uL14"/>
</dbReference>
<dbReference type="InterPro" id="IPR005745">
    <property type="entry name" value="Ribosomal_uL14_bac-type"/>
</dbReference>
<dbReference type="InterPro" id="IPR019972">
    <property type="entry name" value="Ribosomal_uL14_CS"/>
</dbReference>
<dbReference type="InterPro" id="IPR036853">
    <property type="entry name" value="Ribosomal_uL14_sf"/>
</dbReference>
<dbReference type="NCBIfam" id="TIGR01067">
    <property type="entry name" value="rplN_bact"/>
    <property type="match status" value="1"/>
</dbReference>
<dbReference type="PANTHER" id="PTHR11761">
    <property type="entry name" value="50S/60S RIBOSOMAL PROTEIN L14/L23"/>
    <property type="match status" value="1"/>
</dbReference>
<dbReference type="PANTHER" id="PTHR11761:SF3">
    <property type="entry name" value="LARGE RIBOSOMAL SUBUNIT PROTEIN UL14M"/>
    <property type="match status" value="1"/>
</dbReference>
<dbReference type="Pfam" id="PF00238">
    <property type="entry name" value="Ribosomal_L14"/>
    <property type="match status" value="1"/>
</dbReference>
<dbReference type="SMART" id="SM01374">
    <property type="entry name" value="Ribosomal_L14"/>
    <property type="match status" value="1"/>
</dbReference>
<dbReference type="SUPFAM" id="SSF50193">
    <property type="entry name" value="Ribosomal protein L14"/>
    <property type="match status" value="1"/>
</dbReference>
<dbReference type="PROSITE" id="PS00049">
    <property type="entry name" value="RIBOSOMAL_L14"/>
    <property type="match status" value="1"/>
</dbReference>
<comment type="function">
    <text evidence="1">Binds to 23S rRNA. Forms part of two intersubunit bridges in the 70S ribosome.</text>
</comment>
<comment type="subunit">
    <text evidence="1">Part of the 50S ribosomal subunit. Forms a cluster with proteins L3 and L19. In the 70S ribosome, L14 and L19 interact and together make contacts with the 16S rRNA in bridges B5 and B8.</text>
</comment>
<comment type="similarity">
    <text evidence="1">Belongs to the universal ribosomal protein uL14 family.</text>
</comment>
<evidence type="ECO:0000255" key="1">
    <source>
        <dbReference type="HAMAP-Rule" id="MF_01367"/>
    </source>
</evidence>
<evidence type="ECO:0000305" key="2"/>